<sequence>MTAIQLIVGLGNPGPEYEQTRHNAGALFVERIASAQRVSLTADKKYFGLTAKFSHQGNDVRLLIPTTYMNRSGQSVAALANFFRIKPEAILVAHDELDLPPGVAKLKRGGGHGGHNGLRDIIAQLGNQNDFHRLRLGIGHPGDAKLVSNFVLGRAPRAEQEKLDASIDFALGVLPDVLAGDFAKAMRELHSQKA</sequence>
<organism>
    <name type="scientific">Pseudomonas putida (strain GB-1)</name>
    <dbReference type="NCBI Taxonomy" id="76869"/>
    <lineage>
        <taxon>Bacteria</taxon>
        <taxon>Pseudomonadati</taxon>
        <taxon>Pseudomonadota</taxon>
        <taxon>Gammaproteobacteria</taxon>
        <taxon>Pseudomonadales</taxon>
        <taxon>Pseudomonadaceae</taxon>
        <taxon>Pseudomonas</taxon>
    </lineage>
</organism>
<protein>
    <recommendedName>
        <fullName evidence="1">Peptidyl-tRNA hydrolase</fullName>
        <shortName evidence="1">Pth</shortName>
        <ecNumber evidence="1">3.1.1.29</ecNumber>
    </recommendedName>
</protein>
<name>PTH_PSEPG</name>
<dbReference type="EC" id="3.1.1.29" evidence="1"/>
<dbReference type="EMBL" id="CP000926">
    <property type="protein sequence ID" value="ABY96674.1"/>
    <property type="molecule type" value="Genomic_DNA"/>
</dbReference>
<dbReference type="RefSeq" id="WP_012270476.1">
    <property type="nucleotide sequence ID" value="NC_010322.1"/>
</dbReference>
<dbReference type="SMR" id="B0KND4"/>
<dbReference type="GeneID" id="83668010"/>
<dbReference type="KEGG" id="ppg:PputGB1_0764"/>
<dbReference type="eggNOG" id="COG0193">
    <property type="taxonomic scope" value="Bacteria"/>
</dbReference>
<dbReference type="HOGENOM" id="CLU_062456_3_1_6"/>
<dbReference type="Proteomes" id="UP000002157">
    <property type="component" value="Chromosome"/>
</dbReference>
<dbReference type="GO" id="GO:0005737">
    <property type="term" value="C:cytoplasm"/>
    <property type="evidence" value="ECO:0007669"/>
    <property type="project" value="UniProtKB-SubCell"/>
</dbReference>
<dbReference type="GO" id="GO:0004045">
    <property type="term" value="F:peptidyl-tRNA hydrolase activity"/>
    <property type="evidence" value="ECO:0007669"/>
    <property type="project" value="UniProtKB-UniRule"/>
</dbReference>
<dbReference type="GO" id="GO:0000049">
    <property type="term" value="F:tRNA binding"/>
    <property type="evidence" value="ECO:0007669"/>
    <property type="project" value="UniProtKB-UniRule"/>
</dbReference>
<dbReference type="GO" id="GO:0006515">
    <property type="term" value="P:protein quality control for misfolded or incompletely synthesized proteins"/>
    <property type="evidence" value="ECO:0007669"/>
    <property type="project" value="UniProtKB-UniRule"/>
</dbReference>
<dbReference type="GO" id="GO:0072344">
    <property type="term" value="P:rescue of stalled ribosome"/>
    <property type="evidence" value="ECO:0007669"/>
    <property type="project" value="UniProtKB-UniRule"/>
</dbReference>
<dbReference type="CDD" id="cd00462">
    <property type="entry name" value="PTH"/>
    <property type="match status" value="1"/>
</dbReference>
<dbReference type="FunFam" id="3.40.50.1470:FF:000001">
    <property type="entry name" value="Peptidyl-tRNA hydrolase"/>
    <property type="match status" value="1"/>
</dbReference>
<dbReference type="Gene3D" id="3.40.50.1470">
    <property type="entry name" value="Peptidyl-tRNA hydrolase"/>
    <property type="match status" value="1"/>
</dbReference>
<dbReference type="HAMAP" id="MF_00083">
    <property type="entry name" value="Pept_tRNA_hydro_bact"/>
    <property type="match status" value="1"/>
</dbReference>
<dbReference type="InterPro" id="IPR001328">
    <property type="entry name" value="Pept_tRNA_hydro"/>
</dbReference>
<dbReference type="InterPro" id="IPR018171">
    <property type="entry name" value="Pept_tRNA_hydro_CS"/>
</dbReference>
<dbReference type="InterPro" id="IPR036416">
    <property type="entry name" value="Pept_tRNA_hydro_sf"/>
</dbReference>
<dbReference type="NCBIfam" id="TIGR00447">
    <property type="entry name" value="pth"/>
    <property type="match status" value="1"/>
</dbReference>
<dbReference type="PANTHER" id="PTHR17224">
    <property type="entry name" value="PEPTIDYL-TRNA HYDROLASE"/>
    <property type="match status" value="1"/>
</dbReference>
<dbReference type="PANTHER" id="PTHR17224:SF1">
    <property type="entry name" value="PEPTIDYL-TRNA HYDROLASE"/>
    <property type="match status" value="1"/>
</dbReference>
<dbReference type="Pfam" id="PF01195">
    <property type="entry name" value="Pept_tRNA_hydro"/>
    <property type="match status" value="1"/>
</dbReference>
<dbReference type="SUPFAM" id="SSF53178">
    <property type="entry name" value="Peptidyl-tRNA hydrolase-like"/>
    <property type="match status" value="1"/>
</dbReference>
<dbReference type="PROSITE" id="PS01195">
    <property type="entry name" value="PEPT_TRNA_HYDROL_1"/>
    <property type="match status" value="1"/>
</dbReference>
<dbReference type="PROSITE" id="PS01196">
    <property type="entry name" value="PEPT_TRNA_HYDROL_2"/>
    <property type="match status" value="1"/>
</dbReference>
<comment type="function">
    <text evidence="1">Hydrolyzes ribosome-free peptidyl-tRNAs (with 1 or more amino acids incorporated), which drop off the ribosome during protein synthesis, or as a result of ribosome stalling.</text>
</comment>
<comment type="function">
    <text evidence="1">Catalyzes the release of premature peptidyl moieties from peptidyl-tRNA molecules trapped in stalled 50S ribosomal subunits, and thus maintains levels of free tRNAs and 50S ribosomes.</text>
</comment>
<comment type="catalytic activity">
    <reaction evidence="1">
        <text>an N-acyl-L-alpha-aminoacyl-tRNA + H2O = an N-acyl-L-amino acid + a tRNA + H(+)</text>
        <dbReference type="Rhea" id="RHEA:54448"/>
        <dbReference type="Rhea" id="RHEA-COMP:10123"/>
        <dbReference type="Rhea" id="RHEA-COMP:13883"/>
        <dbReference type="ChEBI" id="CHEBI:15377"/>
        <dbReference type="ChEBI" id="CHEBI:15378"/>
        <dbReference type="ChEBI" id="CHEBI:59874"/>
        <dbReference type="ChEBI" id="CHEBI:78442"/>
        <dbReference type="ChEBI" id="CHEBI:138191"/>
        <dbReference type="EC" id="3.1.1.29"/>
    </reaction>
</comment>
<comment type="subunit">
    <text evidence="1">Monomer.</text>
</comment>
<comment type="subcellular location">
    <subcellularLocation>
        <location evidence="1">Cytoplasm</location>
    </subcellularLocation>
</comment>
<comment type="similarity">
    <text evidence="1">Belongs to the PTH family.</text>
</comment>
<accession>B0KND4</accession>
<feature type="chain" id="PRO_1000075350" description="Peptidyl-tRNA hydrolase">
    <location>
        <begin position="1"/>
        <end position="194"/>
    </location>
</feature>
<feature type="active site" description="Proton acceptor" evidence="1">
    <location>
        <position position="22"/>
    </location>
</feature>
<feature type="binding site" evidence="1">
    <location>
        <position position="17"/>
    </location>
    <ligand>
        <name>tRNA</name>
        <dbReference type="ChEBI" id="CHEBI:17843"/>
    </ligand>
</feature>
<feature type="binding site" evidence="1">
    <location>
        <position position="68"/>
    </location>
    <ligand>
        <name>tRNA</name>
        <dbReference type="ChEBI" id="CHEBI:17843"/>
    </ligand>
</feature>
<feature type="binding site" evidence="1">
    <location>
        <position position="70"/>
    </location>
    <ligand>
        <name>tRNA</name>
        <dbReference type="ChEBI" id="CHEBI:17843"/>
    </ligand>
</feature>
<feature type="binding site" evidence="1">
    <location>
        <position position="116"/>
    </location>
    <ligand>
        <name>tRNA</name>
        <dbReference type="ChEBI" id="CHEBI:17843"/>
    </ligand>
</feature>
<feature type="site" description="Discriminates between blocked and unblocked aminoacyl-tRNA" evidence="1">
    <location>
        <position position="12"/>
    </location>
</feature>
<feature type="site" description="Stabilizes the basic form of H active site to accept a proton" evidence="1">
    <location>
        <position position="95"/>
    </location>
</feature>
<evidence type="ECO:0000255" key="1">
    <source>
        <dbReference type="HAMAP-Rule" id="MF_00083"/>
    </source>
</evidence>
<gene>
    <name evidence="1" type="primary">pth</name>
    <name type="ordered locus">PputGB1_0764</name>
</gene>
<reference key="1">
    <citation type="submission" date="2008-01" db="EMBL/GenBank/DDBJ databases">
        <title>Complete sequence of Pseudomonas putida GB-1.</title>
        <authorList>
            <consortium name="US DOE Joint Genome Institute"/>
            <person name="Copeland A."/>
            <person name="Lucas S."/>
            <person name="Lapidus A."/>
            <person name="Barry K."/>
            <person name="Glavina del Rio T."/>
            <person name="Dalin E."/>
            <person name="Tice H."/>
            <person name="Pitluck S."/>
            <person name="Bruce D."/>
            <person name="Goodwin L."/>
            <person name="Chertkov O."/>
            <person name="Brettin T."/>
            <person name="Detter J.C."/>
            <person name="Han C."/>
            <person name="Kuske C.R."/>
            <person name="Schmutz J."/>
            <person name="Larimer F."/>
            <person name="Land M."/>
            <person name="Hauser L."/>
            <person name="Kyrpides N."/>
            <person name="Kim E."/>
            <person name="McCarthy J.K."/>
            <person name="Richardson P."/>
        </authorList>
    </citation>
    <scope>NUCLEOTIDE SEQUENCE [LARGE SCALE GENOMIC DNA]</scope>
    <source>
        <strain>GB-1</strain>
    </source>
</reference>
<proteinExistence type="inferred from homology"/>
<keyword id="KW-0963">Cytoplasm</keyword>
<keyword id="KW-0378">Hydrolase</keyword>
<keyword id="KW-0694">RNA-binding</keyword>
<keyword id="KW-0820">tRNA-binding</keyword>